<sequence>MATTQLEYARQGIITDKMKEAALAEGVSPEFIREGIAAGTIIICHNIKHGNGRPLAVGKGLRTKVNANIGTSADDTDITKELEKARVAVRHGADAIMDLSTGGPVDEIRRAIIAETNACIGSVPLYQAALDAVRTKKKAIVDMTVDDIFEGIIKHAEDGVDFITVHCGVTRSTVERMKNEGRLMDVVSRGGAFTVEWMAYNNCENPLFEHFDRLLEITKAYDMTLSLGDGFRPGCLADATDRAQIHELIILGELTQRAQAAGVQVMIEGPGHVPLNQIEANILLQKRLCHGAPFYVLGPLVTDIAPGYDHITCAIGGAIAASAGADFLCYVTPSEHLRLPSVEDVREGVIASRIAAHAADIAKGVKGAMEKDIAMAKCRKKLDWEGQFNLSLDPEKAQRLRAESGVAEHGACTMCGEFCAYKVMDDAMEKQRAAGH</sequence>
<protein>
    <recommendedName>
        <fullName evidence="1">Phosphomethylpyrimidine synthase</fullName>
        <ecNumber evidence="1">4.1.99.17</ecNumber>
    </recommendedName>
    <alternativeName>
        <fullName evidence="1">Hydroxymethylpyrimidine phosphate synthase</fullName>
        <shortName evidence="1">HMP-P synthase</shortName>
        <shortName evidence="1">HMP-phosphate synthase</shortName>
        <shortName evidence="1">HMPP synthase</shortName>
    </alternativeName>
    <alternativeName>
        <fullName evidence="1">Thiamine biosynthesis protein ThiC</fullName>
    </alternativeName>
</protein>
<organism>
    <name type="scientific">Geobacter metallireducens (strain ATCC 53774 / DSM 7210 / GS-15)</name>
    <dbReference type="NCBI Taxonomy" id="269799"/>
    <lineage>
        <taxon>Bacteria</taxon>
        <taxon>Pseudomonadati</taxon>
        <taxon>Thermodesulfobacteriota</taxon>
        <taxon>Desulfuromonadia</taxon>
        <taxon>Geobacterales</taxon>
        <taxon>Geobacteraceae</taxon>
        <taxon>Geobacter</taxon>
    </lineage>
</organism>
<reference key="1">
    <citation type="journal article" date="2009" name="BMC Microbiol.">
        <title>The genome sequence of Geobacter metallireducens: features of metabolism, physiology and regulation common and dissimilar to Geobacter sulfurreducens.</title>
        <authorList>
            <person name="Aklujkar M."/>
            <person name="Krushkal J."/>
            <person name="DiBartolo G."/>
            <person name="Lapidus A."/>
            <person name="Land M.L."/>
            <person name="Lovley D.R."/>
        </authorList>
    </citation>
    <scope>NUCLEOTIDE SEQUENCE [LARGE SCALE GENOMIC DNA]</scope>
    <source>
        <strain>ATCC 53774 / DSM 7210 / GS-15</strain>
    </source>
</reference>
<name>THIC_GEOMG</name>
<accession>Q39RJ6</accession>
<feature type="chain" id="PRO_0000242266" description="Phosphomethylpyrimidine synthase">
    <location>
        <begin position="1"/>
        <end position="436"/>
    </location>
</feature>
<feature type="binding site" evidence="1">
    <location>
        <position position="68"/>
    </location>
    <ligand>
        <name>substrate</name>
    </ligand>
</feature>
<feature type="binding site" evidence="1">
    <location>
        <position position="97"/>
    </location>
    <ligand>
        <name>substrate</name>
    </ligand>
</feature>
<feature type="binding site" evidence="1">
    <location>
        <position position="126"/>
    </location>
    <ligand>
        <name>substrate</name>
    </ligand>
</feature>
<feature type="binding site" evidence="1">
    <location>
        <position position="166"/>
    </location>
    <ligand>
        <name>substrate</name>
    </ligand>
</feature>
<feature type="binding site" evidence="1">
    <location>
        <begin position="188"/>
        <end position="190"/>
    </location>
    <ligand>
        <name>substrate</name>
    </ligand>
</feature>
<feature type="binding site" evidence="1">
    <location>
        <begin position="229"/>
        <end position="232"/>
    </location>
    <ligand>
        <name>substrate</name>
    </ligand>
</feature>
<feature type="binding site" evidence="1">
    <location>
        <position position="268"/>
    </location>
    <ligand>
        <name>substrate</name>
    </ligand>
</feature>
<feature type="binding site" evidence="1">
    <location>
        <position position="272"/>
    </location>
    <ligand>
        <name>Zn(2+)</name>
        <dbReference type="ChEBI" id="CHEBI:29105"/>
    </ligand>
</feature>
<feature type="binding site" evidence="1">
    <location>
        <position position="295"/>
    </location>
    <ligand>
        <name>substrate</name>
    </ligand>
</feature>
<feature type="binding site" evidence="1">
    <location>
        <position position="336"/>
    </location>
    <ligand>
        <name>Zn(2+)</name>
        <dbReference type="ChEBI" id="CHEBI:29105"/>
    </ligand>
</feature>
<feature type="binding site" evidence="1">
    <location>
        <position position="412"/>
    </location>
    <ligand>
        <name>[4Fe-4S] cluster</name>
        <dbReference type="ChEBI" id="CHEBI:49883"/>
        <note>4Fe-4S-S-AdoMet</note>
    </ligand>
</feature>
<feature type="binding site" evidence="1">
    <location>
        <position position="415"/>
    </location>
    <ligand>
        <name>[4Fe-4S] cluster</name>
        <dbReference type="ChEBI" id="CHEBI:49883"/>
        <note>4Fe-4S-S-AdoMet</note>
    </ligand>
</feature>
<feature type="binding site" evidence="1">
    <location>
        <position position="419"/>
    </location>
    <ligand>
        <name>[4Fe-4S] cluster</name>
        <dbReference type="ChEBI" id="CHEBI:49883"/>
        <note>4Fe-4S-S-AdoMet</note>
    </ligand>
</feature>
<keyword id="KW-0004">4Fe-4S</keyword>
<keyword id="KW-0408">Iron</keyword>
<keyword id="KW-0411">Iron-sulfur</keyword>
<keyword id="KW-0456">Lyase</keyword>
<keyword id="KW-0479">Metal-binding</keyword>
<keyword id="KW-1185">Reference proteome</keyword>
<keyword id="KW-0949">S-adenosyl-L-methionine</keyword>
<keyword id="KW-0784">Thiamine biosynthesis</keyword>
<keyword id="KW-0862">Zinc</keyword>
<dbReference type="EC" id="4.1.99.17" evidence="1"/>
<dbReference type="EMBL" id="CP000148">
    <property type="protein sequence ID" value="ABB33128.1"/>
    <property type="molecule type" value="Genomic_DNA"/>
</dbReference>
<dbReference type="RefSeq" id="WP_004512846.1">
    <property type="nucleotide sequence ID" value="NC_007517.1"/>
</dbReference>
<dbReference type="SMR" id="Q39RJ6"/>
<dbReference type="STRING" id="269799.Gmet_2910"/>
<dbReference type="KEGG" id="gme:Gmet_2910"/>
<dbReference type="eggNOG" id="COG0422">
    <property type="taxonomic scope" value="Bacteria"/>
</dbReference>
<dbReference type="HOGENOM" id="CLU_013181_2_2_7"/>
<dbReference type="UniPathway" id="UPA00060"/>
<dbReference type="Proteomes" id="UP000007073">
    <property type="component" value="Chromosome"/>
</dbReference>
<dbReference type="GO" id="GO:0005829">
    <property type="term" value="C:cytosol"/>
    <property type="evidence" value="ECO:0007669"/>
    <property type="project" value="TreeGrafter"/>
</dbReference>
<dbReference type="GO" id="GO:0051539">
    <property type="term" value="F:4 iron, 4 sulfur cluster binding"/>
    <property type="evidence" value="ECO:0007669"/>
    <property type="project" value="UniProtKB-KW"/>
</dbReference>
<dbReference type="GO" id="GO:0016830">
    <property type="term" value="F:carbon-carbon lyase activity"/>
    <property type="evidence" value="ECO:0007669"/>
    <property type="project" value="InterPro"/>
</dbReference>
<dbReference type="GO" id="GO:0008270">
    <property type="term" value="F:zinc ion binding"/>
    <property type="evidence" value="ECO:0007669"/>
    <property type="project" value="UniProtKB-UniRule"/>
</dbReference>
<dbReference type="GO" id="GO:0009228">
    <property type="term" value="P:thiamine biosynthetic process"/>
    <property type="evidence" value="ECO:0007669"/>
    <property type="project" value="UniProtKB-KW"/>
</dbReference>
<dbReference type="GO" id="GO:0009229">
    <property type="term" value="P:thiamine diphosphate biosynthetic process"/>
    <property type="evidence" value="ECO:0007669"/>
    <property type="project" value="UniProtKB-UniRule"/>
</dbReference>
<dbReference type="FunFam" id="3.20.20.540:FF:000001">
    <property type="entry name" value="Phosphomethylpyrimidine synthase"/>
    <property type="match status" value="1"/>
</dbReference>
<dbReference type="Gene3D" id="6.10.250.620">
    <property type="match status" value="1"/>
</dbReference>
<dbReference type="Gene3D" id="3.20.20.540">
    <property type="entry name" value="Radical SAM ThiC family, central domain"/>
    <property type="match status" value="1"/>
</dbReference>
<dbReference type="HAMAP" id="MF_00089">
    <property type="entry name" value="ThiC"/>
    <property type="match status" value="1"/>
</dbReference>
<dbReference type="InterPro" id="IPR037509">
    <property type="entry name" value="ThiC"/>
</dbReference>
<dbReference type="InterPro" id="IPR038521">
    <property type="entry name" value="ThiC/Bza_core_dom"/>
</dbReference>
<dbReference type="InterPro" id="IPR002817">
    <property type="entry name" value="ThiC/BzaA/B"/>
</dbReference>
<dbReference type="NCBIfam" id="NF009895">
    <property type="entry name" value="PRK13352.1"/>
    <property type="match status" value="1"/>
</dbReference>
<dbReference type="NCBIfam" id="TIGR00190">
    <property type="entry name" value="thiC"/>
    <property type="match status" value="1"/>
</dbReference>
<dbReference type="PANTHER" id="PTHR30557:SF1">
    <property type="entry name" value="PHOSPHOMETHYLPYRIMIDINE SYNTHASE, CHLOROPLASTIC"/>
    <property type="match status" value="1"/>
</dbReference>
<dbReference type="PANTHER" id="PTHR30557">
    <property type="entry name" value="THIAMINE BIOSYNTHESIS PROTEIN THIC"/>
    <property type="match status" value="1"/>
</dbReference>
<dbReference type="Pfam" id="PF01964">
    <property type="entry name" value="ThiC_Rad_SAM"/>
    <property type="match status" value="1"/>
</dbReference>
<dbReference type="SFLD" id="SFLDF00407">
    <property type="entry name" value="phosphomethylpyrimidine_syntha"/>
    <property type="match status" value="1"/>
</dbReference>
<dbReference type="SFLD" id="SFLDG01114">
    <property type="entry name" value="phosphomethylpyrimidine_syntha"/>
    <property type="match status" value="1"/>
</dbReference>
<dbReference type="SFLD" id="SFLDS00113">
    <property type="entry name" value="Radical_SAM_Phosphomethylpyrim"/>
    <property type="match status" value="1"/>
</dbReference>
<dbReference type="SUPFAM" id="SSF51569">
    <property type="entry name" value="Aldolase"/>
    <property type="match status" value="1"/>
</dbReference>
<proteinExistence type="inferred from homology"/>
<comment type="function">
    <text evidence="1">Catalyzes the synthesis of the hydroxymethylpyrimidine phosphate (HMP-P) moiety of thiamine from aminoimidazole ribotide (AIR) in a radical S-adenosyl-L-methionine (SAM)-dependent reaction.</text>
</comment>
<comment type="catalytic activity">
    <reaction evidence="1">
        <text>5-amino-1-(5-phospho-beta-D-ribosyl)imidazole + S-adenosyl-L-methionine = 4-amino-2-methyl-5-(phosphooxymethyl)pyrimidine + CO + 5'-deoxyadenosine + formate + L-methionine + 3 H(+)</text>
        <dbReference type="Rhea" id="RHEA:24840"/>
        <dbReference type="ChEBI" id="CHEBI:15378"/>
        <dbReference type="ChEBI" id="CHEBI:15740"/>
        <dbReference type="ChEBI" id="CHEBI:17245"/>
        <dbReference type="ChEBI" id="CHEBI:17319"/>
        <dbReference type="ChEBI" id="CHEBI:57844"/>
        <dbReference type="ChEBI" id="CHEBI:58354"/>
        <dbReference type="ChEBI" id="CHEBI:59789"/>
        <dbReference type="ChEBI" id="CHEBI:137981"/>
        <dbReference type="EC" id="4.1.99.17"/>
    </reaction>
</comment>
<comment type="cofactor">
    <cofactor evidence="1">
        <name>[4Fe-4S] cluster</name>
        <dbReference type="ChEBI" id="CHEBI:49883"/>
    </cofactor>
    <text evidence="1">Binds 1 [4Fe-4S] cluster per subunit. The cluster is coordinated with 3 cysteines and an exchangeable S-adenosyl-L-methionine.</text>
</comment>
<comment type="pathway">
    <text evidence="1">Cofactor biosynthesis; thiamine diphosphate biosynthesis.</text>
</comment>
<comment type="subunit">
    <text evidence="1">Homodimer.</text>
</comment>
<comment type="similarity">
    <text evidence="1">Belongs to the ThiC family.</text>
</comment>
<evidence type="ECO:0000255" key="1">
    <source>
        <dbReference type="HAMAP-Rule" id="MF_00089"/>
    </source>
</evidence>
<evidence type="ECO:0000312" key="2">
    <source>
        <dbReference type="EMBL" id="ABB33128.1"/>
    </source>
</evidence>
<gene>
    <name evidence="1" type="primary">thiC</name>
    <name evidence="2" type="synonym">thiC-1</name>
    <name type="ordered locus">Gmet_2910</name>
</gene>